<accession>Q9NUD7</accession>
<accession>A3KPE0</accession>
<accession>B2RPH9</accession>
<accession>Q8N840</accession>
<accession>Q8NAX5</accession>
<organism>
    <name type="scientific">Homo sapiens</name>
    <name type="common">Human</name>
    <dbReference type="NCBI Taxonomy" id="9606"/>
    <lineage>
        <taxon>Eukaryota</taxon>
        <taxon>Metazoa</taxon>
        <taxon>Chordata</taxon>
        <taxon>Craniata</taxon>
        <taxon>Vertebrata</taxon>
        <taxon>Euteleostomi</taxon>
        <taxon>Mammalia</taxon>
        <taxon>Eutheria</taxon>
        <taxon>Euarchontoglires</taxon>
        <taxon>Primates</taxon>
        <taxon>Haplorrhini</taxon>
        <taxon>Catarrhini</taxon>
        <taxon>Hominidae</taxon>
        <taxon>Homo</taxon>
    </lineage>
</organism>
<keyword id="KW-0175">Coiled coil</keyword>
<keyword id="KW-1267">Proteomics identification</keyword>
<keyword id="KW-1185">Reference proteome</keyword>
<feature type="chain" id="PRO_0000079450" description="Uncharacterized protein C20orf96">
    <location>
        <begin position="1"/>
        <end position="363"/>
    </location>
</feature>
<feature type="coiled-coil region" evidence="1">
    <location>
        <begin position="109"/>
        <end position="329"/>
    </location>
</feature>
<feature type="sequence variant" id="VAR_056847" description="In dbSNP:rs3827147." evidence="2 3 4">
    <original>I</original>
    <variation>F</variation>
    <location>
        <position position="305"/>
    </location>
</feature>
<comment type="interaction">
    <interactant intactId="EBI-21372475">
        <id>Q9NUD7</id>
    </interactant>
    <interactant intactId="EBI-20749422">
        <id>Q9C0B2</id>
        <label>CFAP74</label>
    </interactant>
    <organismsDiffer>false</organismsDiffer>
    <experiments>2</experiments>
</comment>
<comment type="sequence caution" evidence="5">
    <conflict type="frameshift">
        <sequence resource="EMBL-CDS" id="BAC03772"/>
    </conflict>
</comment>
<reference key="1">
    <citation type="journal article" date="2004" name="Nat. Genet.">
        <title>Complete sequencing and characterization of 21,243 full-length human cDNAs.</title>
        <authorList>
            <person name="Ota T."/>
            <person name="Suzuki Y."/>
            <person name="Nishikawa T."/>
            <person name="Otsuki T."/>
            <person name="Sugiyama T."/>
            <person name="Irie R."/>
            <person name="Wakamatsu A."/>
            <person name="Hayashi K."/>
            <person name="Sato H."/>
            <person name="Nagai K."/>
            <person name="Kimura K."/>
            <person name="Makita H."/>
            <person name="Sekine M."/>
            <person name="Obayashi M."/>
            <person name="Nishi T."/>
            <person name="Shibahara T."/>
            <person name="Tanaka T."/>
            <person name="Ishii S."/>
            <person name="Yamamoto J."/>
            <person name="Saito K."/>
            <person name="Kawai Y."/>
            <person name="Isono Y."/>
            <person name="Nakamura Y."/>
            <person name="Nagahari K."/>
            <person name="Murakami K."/>
            <person name="Yasuda T."/>
            <person name="Iwayanagi T."/>
            <person name="Wagatsuma M."/>
            <person name="Shiratori A."/>
            <person name="Sudo H."/>
            <person name="Hosoiri T."/>
            <person name="Kaku Y."/>
            <person name="Kodaira H."/>
            <person name="Kondo H."/>
            <person name="Sugawara M."/>
            <person name="Takahashi M."/>
            <person name="Kanda K."/>
            <person name="Yokoi T."/>
            <person name="Furuya T."/>
            <person name="Kikkawa E."/>
            <person name="Omura Y."/>
            <person name="Abe K."/>
            <person name="Kamihara K."/>
            <person name="Katsuta N."/>
            <person name="Sato K."/>
            <person name="Tanikawa M."/>
            <person name="Yamazaki M."/>
            <person name="Ninomiya K."/>
            <person name="Ishibashi T."/>
            <person name="Yamashita H."/>
            <person name="Murakawa K."/>
            <person name="Fujimori K."/>
            <person name="Tanai H."/>
            <person name="Kimata M."/>
            <person name="Watanabe M."/>
            <person name="Hiraoka S."/>
            <person name="Chiba Y."/>
            <person name="Ishida S."/>
            <person name="Ono Y."/>
            <person name="Takiguchi S."/>
            <person name="Watanabe S."/>
            <person name="Yosida M."/>
            <person name="Hotuta T."/>
            <person name="Kusano J."/>
            <person name="Kanehori K."/>
            <person name="Takahashi-Fujii A."/>
            <person name="Hara H."/>
            <person name="Tanase T.-O."/>
            <person name="Nomura Y."/>
            <person name="Togiya S."/>
            <person name="Komai F."/>
            <person name="Hara R."/>
            <person name="Takeuchi K."/>
            <person name="Arita M."/>
            <person name="Imose N."/>
            <person name="Musashino K."/>
            <person name="Yuuki H."/>
            <person name="Oshima A."/>
            <person name="Sasaki N."/>
            <person name="Aotsuka S."/>
            <person name="Yoshikawa Y."/>
            <person name="Matsunawa H."/>
            <person name="Ichihara T."/>
            <person name="Shiohata N."/>
            <person name="Sano S."/>
            <person name="Moriya S."/>
            <person name="Momiyama H."/>
            <person name="Satoh N."/>
            <person name="Takami S."/>
            <person name="Terashima Y."/>
            <person name="Suzuki O."/>
            <person name="Nakagawa S."/>
            <person name="Senoh A."/>
            <person name="Mizoguchi H."/>
            <person name="Goto Y."/>
            <person name="Shimizu F."/>
            <person name="Wakebe H."/>
            <person name="Hishigaki H."/>
            <person name="Watanabe T."/>
            <person name="Sugiyama A."/>
            <person name="Takemoto M."/>
            <person name="Kawakami B."/>
            <person name="Yamazaki M."/>
            <person name="Watanabe K."/>
            <person name="Kumagai A."/>
            <person name="Itakura S."/>
            <person name="Fukuzumi Y."/>
            <person name="Fujimori Y."/>
            <person name="Komiyama M."/>
            <person name="Tashiro H."/>
            <person name="Tanigami A."/>
            <person name="Fujiwara T."/>
            <person name="Ono T."/>
            <person name="Yamada K."/>
            <person name="Fujii Y."/>
            <person name="Ozaki K."/>
            <person name="Hirao M."/>
            <person name="Ohmori Y."/>
            <person name="Kawabata A."/>
            <person name="Hikiji T."/>
            <person name="Kobatake N."/>
            <person name="Inagaki H."/>
            <person name="Ikema Y."/>
            <person name="Okamoto S."/>
            <person name="Okitani R."/>
            <person name="Kawakami T."/>
            <person name="Noguchi S."/>
            <person name="Itoh T."/>
            <person name="Shigeta K."/>
            <person name="Senba T."/>
            <person name="Matsumura K."/>
            <person name="Nakajima Y."/>
            <person name="Mizuno T."/>
            <person name="Morinaga M."/>
            <person name="Sasaki M."/>
            <person name="Togashi T."/>
            <person name="Oyama M."/>
            <person name="Hata H."/>
            <person name="Watanabe M."/>
            <person name="Komatsu T."/>
            <person name="Mizushima-Sugano J."/>
            <person name="Satoh T."/>
            <person name="Shirai Y."/>
            <person name="Takahashi Y."/>
            <person name="Nakagawa K."/>
            <person name="Okumura K."/>
            <person name="Nagase T."/>
            <person name="Nomura N."/>
            <person name="Kikuchi H."/>
            <person name="Masuho Y."/>
            <person name="Yamashita R."/>
            <person name="Nakai K."/>
            <person name="Yada T."/>
            <person name="Nakamura Y."/>
            <person name="Ohara O."/>
            <person name="Isogai T."/>
            <person name="Sugano S."/>
        </authorList>
    </citation>
    <scope>NUCLEOTIDE SEQUENCE [LARGE SCALE MRNA]</scope>
    <scope>VARIANT PHE-305</scope>
    <source>
        <tissue>Kidney</tissue>
        <tissue>Testis</tissue>
    </source>
</reference>
<reference key="2">
    <citation type="journal article" date="2001" name="Nature">
        <title>The DNA sequence and comparative analysis of human chromosome 20.</title>
        <authorList>
            <person name="Deloukas P."/>
            <person name="Matthews L.H."/>
            <person name="Ashurst J.L."/>
            <person name="Burton J."/>
            <person name="Gilbert J.G.R."/>
            <person name="Jones M."/>
            <person name="Stavrides G."/>
            <person name="Almeida J.P."/>
            <person name="Babbage A.K."/>
            <person name="Bagguley C.L."/>
            <person name="Bailey J."/>
            <person name="Barlow K.F."/>
            <person name="Bates K.N."/>
            <person name="Beard L.M."/>
            <person name="Beare D.M."/>
            <person name="Beasley O.P."/>
            <person name="Bird C.P."/>
            <person name="Blakey S.E."/>
            <person name="Bridgeman A.M."/>
            <person name="Brown A.J."/>
            <person name="Buck D."/>
            <person name="Burrill W.D."/>
            <person name="Butler A.P."/>
            <person name="Carder C."/>
            <person name="Carter N.P."/>
            <person name="Chapman J.C."/>
            <person name="Clamp M."/>
            <person name="Clark G."/>
            <person name="Clark L.N."/>
            <person name="Clark S.Y."/>
            <person name="Clee C.M."/>
            <person name="Clegg S."/>
            <person name="Cobley V.E."/>
            <person name="Collier R.E."/>
            <person name="Connor R.E."/>
            <person name="Corby N.R."/>
            <person name="Coulson A."/>
            <person name="Coville G.J."/>
            <person name="Deadman R."/>
            <person name="Dhami P.D."/>
            <person name="Dunn M."/>
            <person name="Ellington A.G."/>
            <person name="Frankland J.A."/>
            <person name="Fraser A."/>
            <person name="French L."/>
            <person name="Garner P."/>
            <person name="Grafham D.V."/>
            <person name="Griffiths C."/>
            <person name="Griffiths M.N.D."/>
            <person name="Gwilliam R."/>
            <person name="Hall R.E."/>
            <person name="Hammond S."/>
            <person name="Harley J.L."/>
            <person name="Heath P.D."/>
            <person name="Ho S."/>
            <person name="Holden J.L."/>
            <person name="Howden P.J."/>
            <person name="Huckle E."/>
            <person name="Hunt A.R."/>
            <person name="Hunt S.E."/>
            <person name="Jekosch K."/>
            <person name="Johnson C.M."/>
            <person name="Johnson D."/>
            <person name="Kay M.P."/>
            <person name="Kimberley A.M."/>
            <person name="King A."/>
            <person name="Knights A."/>
            <person name="Laird G.K."/>
            <person name="Lawlor S."/>
            <person name="Lehvaeslaiho M.H."/>
            <person name="Leversha M.A."/>
            <person name="Lloyd C."/>
            <person name="Lloyd D.M."/>
            <person name="Lovell J.D."/>
            <person name="Marsh V.L."/>
            <person name="Martin S.L."/>
            <person name="McConnachie L.J."/>
            <person name="McLay K."/>
            <person name="McMurray A.A."/>
            <person name="Milne S.A."/>
            <person name="Mistry D."/>
            <person name="Moore M.J.F."/>
            <person name="Mullikin J.C."/>
            <person name="Nickerson T."/>
            <person name="Oliver K."/>
            <person name="Parker A."/>
            <person name="Patel R."/>
            <person name="Pearce T.A.V."/>
            <person name="Peck A.I."/>
            <person name="Phillimore B.J.C.T."/>
            <person name="Prathalingam S.R."/>
            <person name="Plumb R.W."/>
            <person name="Ramsay H."/>
            <person name="Rice C.M."/>
            <person name="Ross M.T."/>
            <person name="Scott C.E."/>
            <person name="Sehra H.K."/>
            <person name="Shownkeen R."/>
            <person name="Sims S."/>
            <person name="Skuce C.D."/>
            <person name="Smith M.L."/>
            <person name="Soderlund C."/>
            <person name="Steward C.A."/>
            <person name="Sulston J.E."/>
            <person name="Swann R.M."/>
            <person name="Sycamore N."/>
            <person name="Taylor R."/>
            <person name="Tee L."/>
            <person name="Thomas D.W."/>
            <person name="Thorpe A."/>
            <person name="Tracey A."/>
            <person name="Tromans A.C."/>
            <person name="Vaudin M."/>
            <person name="Wall M."/>
            <person name="Wallis J.M."/>
            <person name="Whitehead S.L."/>
            <person name="Whittaker P."/>
            <person name="Willey D.L."/>
            <person name="Williams L."/>
            <person name="Williams S.A."/>
            <person name="Wilming L."/>
            <person name="Wray P.W."/>
            <person name="Hubbard T."/>
            <person name="Durbin R.M."/>
            <person name="Bentley D.R."/>
            <person name="Beck S."/>
            <person name="Rogers J."/>
        </authorList>
    </citation>
    <scope>NUCLEOTIDE SEQUENCE [LARGE SCALE GENOMIC DNA]</scope>
</reference>
<reference key="3">
    <citation type="submission" date="2005-09" db="EMBL/GenBank/DDBJ databases">
        <authorList>
            <person name="Mural R.J."/>
            <person name="Istrail S."/>
            <person name="Sutton G.G."/>
            <person name="Florea L."/>
            <person name="Halpern A.L."/>
            <person name="Mobarry C.M."/>
            <person name="Lippert R."/>
            <person name="Walenz B."/>
            <person name="Shatkay H."/>
            <person name="Dew I."/>
            <person name="Miller J.R."/>
            <person name="Flanigan M.J."/>
            <person name="Edwards N.J."/>
            <person name="Bolanos R."/>
            <person name="Fasulo D."/>
            <person name="Halldorsson B.V."/>
            <person name="Hannenhalli S."/>
            <person name="Turner R."/>
            <person name="Yooseph S."/>
            <person name="Lu F."/>
            <person name="Nusskern D.R."/>
            <person name="Shue B.C."/>
            <person name="Zheng X.H."/>
            <person name="Zhong F."/>
            <person name="Delcher A.L."/>
            <person name="Huson D.H."/>
            <person name="Kravitz S.A."/>
            <person name="Mouchard L."/>
            <person name="Reinert K."/>
            <person name="Remington K.A."/>
            <person name="Clark A.G."/>
            <person name="Waterman M.S."/>
            <person name="Eichler E.E."/>
            <person name="Adams M.D."/>
            <person name="Hunkapiller M.W."/>
            <person name="Myers E.W."/>
            <person name="Venter J.C."/>
        </authorList>
    </citation>
    <scope>NUCLEOTIDE SEQUENCE [LARGE SCALE GENOMIC DNA]</scope>
    <scope>VARIANT PHE-305</scope>
</reference>
<reference key="4">
    <citation type="journal article" date="2004" name="Genome Res.">
        <title>The status, quality, and expansion of the NIH full-length cDNA project: the Mammalian Gene Collection (MGC).</title>
        <authorList>
            <consortium name="The MGC Project Team"/>
        </authorList>
    </citation>
    <scope>NUCLEOTIDE SEQUENCE [LARGE SCALE MRNA]</scope>
    <scope>VARIANT PHE-305</scope>
    <source>
        <tissue>Brain</tissue>
    </source>
</reference>
<name>CT096_HUMAN</name>
<evidence type="ECO:0000255" key="1"/>
<evidence type="ECO:0000269" key="2">
    <source>
    </source>
</evidence>
<evidence type="ECO:0000269" key="3">
    <source>
    </source>
</evidence>
<evidence type="ECO:0000269" key="4">
    <source ref="3"/>
</evidence>
<evidence type="ECO:0000305" key="5"/>
<gene>
    <name type="primary">C20orf96</name>
</gene>
<protein>
    <recommendedName>
        <fullName>Uncharacterized protein C20orf96</fullName>
    </recommendedName>
</protein>
<proteinExistence type="evidence at protein level"/>
<dbReference type="EMBL" id="AK097394">
    <property type="protein sequence ID" value="BAC05033.1"/>
    <property type="molecule type" value="mRNA"/>
</dbReference>
<dbReference type="EMBL" id="AK091924">
    <property type="protein sequence ID" value="BAC03772.1"/>
    <property type="status" value="ALT_FRAME"/>
    <property type="molecule type" value="mRNA"/>
</dbReference>
<dbReference type="EMBL" id="AL034548">
    <property type="status" value="NOT_ANNOTATED_CDS"/>
    <property type="molecule type" value="Genomic_DNA"/>
</dbReference>
<dbReference type="EMBL" id="CH471133">
    <property type="protein sequence ID" value="EAX10681.1"/>
    <property type="molecule type" value="Genomic_DNA"/>
</dbReference>
<dbReference type="EMBL" id="BC134417">
    <property type="protein sequence ID" value="AAI34418.1"/>
    <property type="molecule type" value="mRNA"/>
</dbReference>
<dbReference type="EMBL" id="BC137450">
    <property type="protein sequence ID" value="AAI37451.1"/>
    <property type="molecule type" value="mRNA"/>
</dbReference>
<dbReference type="CCDS" id="CCDS12994.1"/>
<dbReference type="RefSeq" id="NP_542138.1">
    <property type="nucleotide sequence ID" value="NM_080571.1"/>
</dbReference>
<dbReference type="RefSeq" id="NP_695001.2">
    <property type="nucleotide sequence ID" value="NM_153269.3"/>
</dbReference>
<dbReference type="SMR" id="Q9NUD7"/>
<dbReference type="BioGRID" id="126645">
    <property type="interactions" value="19"/>
</dbReference>
<dbReference type="FunCoup" id="Q9NUD7">
    <property type="interactions" value="10"/>
</dbReference>
<dbReference type="IntAct" id="Q9NUD7">
    <property type="interactions" value="13"/>
</dbReference>
<dbReference type="STRING" id="9606.ENSP00000353470"/>
<dbReference type="iPTMnet" id="Q9NUD7"/>
<dbReference type="PhosphoSitePlus" id="Q9NUD7"/>
<dbReference type="BioMuta" id="C20orf96"/>
<dbReference type="DMDM" id="26392576"/>
<dbReference type="MassIVE" id="Q9NUD7"/>
<dbReference type="PaxDb" id="9606-ENSP00000353470"/>
<dbReference type="PeptideAtlas" id="Q9NUD7"/>
<dbReference type="ProteomicsDB" id="82665"/>
<dbReference type="Antibodypedia" id="62706">
    <property type="antibodies" value="32 antibodies from 8 providers"/>
</dbReference>
<dbReference type="DNASU" id="140680"/>
<dbReference type="Ensembl" id="ENST00000360321.7">
    <property type="protein sequence ID" value="ENSP00000353470.2"/>
    <property type="gene ID" value="ENSG00000196476.12"/>
</dbReference>
<dbReference type="GeneID" id="140680"/>
<dbReference type="KEGG" id="hsa:140680"/>
<dbReference type="MANE-Select" id="ENST00000360321.7">
    <property type="protein sequence ID" value="ENSP00000353470.2"/>
    <property type="RefSeq nucleotide sequence ID" value="NM_153269.3"/>
    <property type="RefSeq protein sequence ID" value="NP_695001.2"/>
</dbReference>
<dbReference type="UCSC" id="uc002wde.3">
    <property type="organism name" value="human"/>
</dbReference>
<dbReference type="AGR" id="HGNC:16227"/>
<dbReference type="CTD" id="140680"/>
<dbReference type="DisGeNET" id="140680"/>
<dbReference type="GeneCards" id="C20orf96"/>
<dbReference type="HGNC" id="HGNC:16227">
    <property type="gene designation" value="C20orf96"/>
</dbReference>
<dbReference type="HPA" id="ENSG00000196476">
    <property type="expression patterns" value="Low tissue specificity"/>
</dbReference>
<dbReference type="neXtProt" id="NX_Q9NUD7"/>
<dbReference type="OpenTargets" id="ENSG00000196476"/>
<dbReference type="PharmGKB" id="PA25803"/>
<dbReference type="VEuPathDB" id="HostDB:ENSG00000196476"/>
<dbReference type="eggNOG" id="ENOG502S397">
    <property type="taxonomic scope" value="Eukaryota"/>
</dbReference>
<dbReference type="GeneTree" id="ENSGT00390000003339"/>
<dbReference type="HOGENOM" id="CLU_065592_0_0_1"/>
<dbReference type="InParanoid" id="Q9NUD7"/>
<dbReference type="OMA" id="CNHEDFL"/>
<dbReference type="OrthoDB" id="10003267at2759"/>
<dbReference type="PAN-GO" id="Q9NUD7">
    <property type="GO annotations" value="0 GO annotations based on evolutionary models"/>
</dbReference>
<dbReference type="PhylomeDB" id="Q9NUD7"/>
<dbReference type="TreeFam" id="TF330721"/>
<dbReference type="PathwayCommons" id="Q9NUD7"/>
<dbReference type="SignaLink" id="Q9NUD7"/>
<dbReference type="BioGRID-ORCS" id="140680">
    <property type="hits" value="15 hits in 1130 CRISPR screens"/>
</dbReference>
<dbReference type="ChiTaRS" id="C20orf96">
    <property type="organism name" value="human"/>
</dbReference>
<dbReference type="GenomeRNAi" id="140680"/>
<dbReference type="Pharos" id="Q9NUD7">
    <property type="development level" value="Tdark"/>
</dbReference>
<dbReference type="PRO" id="PR:Q9NUD7"/>
<dbReference type="Proteomes" id="UP000005640">
    <property type="component" value="Chromosome 20"/>
</dbReference>
<dbReference type="RNAct" id="Q9NUD7">
    <property type="molecule type" value="protein"/>
</dbReference>
<dbReference type="Bgee" id="ENSG00000196476">
    <property type="expression patterns" value="Expressed in right uterine tube and 97 other cell types or tissues"/>
</dbReference>
<dbReference type="ExpressionAtlas" id="Q9NUD7">
    <property type="expression patterns" value="baseline and differential"/>
</dbReference>
<dbReference type="InterPro" id="IPR029236">
    <property type="entry name" value="DUF4618"/>
</dbReference>
<dbReference type="PANTHER" id="PTHR28574">
    <property type="entry name" value="RIKEN CDNA 6820408C15"/>
    <property type="match status" value="1"/>
</dbReference>
<dbReference type="PANTHER" id="PTHR28574:SF1">
    <property type="entry name" value="RIKEN CDNA 6820408C15 GENE"/>
    <property type="match status" value="1"/>
</dbReference>
<dbReference type="Pfam" id="PF15397">
    <property type="entry name" value="DUF4618"/>
    <property type="match status" value="1"/>
</dbReference>
<sequence>MAHVLQKPKHSGTHSIVQEFQVPDYVPWQQSKQETKPSTLPPVQQANSLHTSKMKTLTRVQPVFHFKPTTVVTSCQPKNPRELHRRRKLDPGKMHAKIWLMKTSLRSGRAALRELRSRENFLSKLNRELIETIQEMENSTTLHVRALLQQQDTLATIIDILEYSNKKRLQQLKSELQEWEEKKKCKMSYLEQQAEQLNAKIEKTQEEVNFLSTYMDHEYSIKSVQISTLMRQLQQVKDSQQDELDDLGEMRRKVLESLSDKIQKKKKKILSSVVAETQRPYEEALLQKMWESQDFLKCMQRFREIIDQFEENMPVLRAEVEELQAQTREPREVIFEDVLLRRPKCTPDMDVILNIPVEEPLPF</sequence>